<proteinExistence type="inferred from homology"/>
<reference key="1">
    <citation type="journal article" date="2005" name="PLoS Biol.">
        <title>The genome sequence of Rickettsia felis identifies the first putative conjugative plasmid in an obligate intracellular parasite.</title>
        <authorList>
            <person name="Ogata H."/>
            <person name="Renesto P."/>
            <person name="Audic S."/>
            <person name="Robert C."/>
            <person name="Blanc G."/>
            <person name="Fournier P.-E."/>
            <person name="Parinello H."/>
            <person name="Claverie J.-M."/>
            <person name="Raoult D."/>
        </authorList>
    </citation>
    <scope>NUCLEOTIDE SEQUENCE [LARGE SCALE GENOMIC DNA]</scope>
    <source>
        <strain>ATCC VR-1525 / URRWXCal2</strain>
    </source>
</reference>
<name>ATP6_RICFE</name>
<evidence type="ECO:0000255" key="1">
    <source>
        <dbReference type="HAMAP-Rule" id="MF_01393"/>
    </source>
</evidence>
<keyword id="KW-0066">ATP synthesis</keyword>
<keyword id="KW-0997">Cell inner membrane</keyword>
<keyword id="KW-1003">Cell membrane</keyword>
<keyword id="KW-0138">CF(0)</keyword>
<keyword id="KW-0375">Hydrogen ion transport</keyword>
<keyword id="KW-0406">Ion transport</keyword>
<keyword id="KW-0472">Membrane</keyword>
<keyword id="KW-0812">Transmembrane</keyword>
<keyword id="KW-1133">Transmembrane helix</keyword>
<keyword id="KW-0813">Transport</keyword>
<protein>
    <recommendedName>
        <fullName evidence="1">ATP synthase subunit a</fullName>
    </recommendedName>
    <alternativeName>
        <fullName evidence="1">ATP synthase F0 sector subunit a</fullName>
    </alternativeName>
    <alternativeName>
        <fullName evidence="1">F-ATPase subunit 6</fullName>
    </alternativeName>
</protein>
<comment type="function">
    <text evidence="1">Key component of the proton channel; it plays a direct role in the translocation of protons across the membrane.</text>
</comment>
<comment type="subunit">
    <text evidence="1">F-type ATPases have 2 components, CF(1) - the catalytic core - and CF(0) - the membrane proton channel. CF(1) has five subunits: alpha(3), beta(3), gamma(1), delta(1), epsilon(1). CF(0) has three main subunits: a(1), b(2) and c(9-12). The alpha and beta chains form an alternating ring which encloses part of the gamma chain. CF(1) is attached to CF(0) by a central stalk formed by the gamma and epsilon chains, while a peripheral stalk is formed by the delta and b chains.</text>
</comment>
<comment type="subcellular location">
    <subcellularLocation>
        <location evidence="1">Cell inner membrane</location>
        <topology evidence="1">Multi-pass membrane protein</topology>
    </subcellularLocation>
</comment>
<comment type="similarity">
    <text evidence="1">Belongs to the ATPase A chain family.</text>
</comment>
<organism>
    <name type="scientific">Rickettsia felis (strain ATCC VR-1525 / URRWXCal2)</name>
    <name type="common">Rickettsia azadi</name>
    <dbReference type="NCBI Taxonomy" id="315456"/>
    <lineage>
        <taxon>Bacteria</taxon>
        <taxon>Pseudomonadati</taxon>
        <taxon>Pseudomonadota</taxon>
        <taxon>Alphaproteobacteria</taxon>
        <taxon>Rickettsiales</taxon>
        <taxon>Rickettsiaceae</taxon>
        <taxon>Rickettsieae</taxon>
        <taxon>Rickettsia</taxon>
        <taxon>spotted fever group</taxon>
    </lineage>
</organism>
<gene>
    <name evidence="1" type="primary">atpB</name>
    <name type="ordered locus">RF_0030</name>
</gene>
<sequence length="242" mass="27350">MTHSPLAQFDIKKLIDIKMFGFDVSFTNSSIYMLLASILALTYFYLAFYNRKLVPSRLQVSAEIVYNLVADMLNQNIGVKGRKFIPLVFSLFIFILFCNLLGMTPYSFTATSHIIVTFTLAILVFLTVTIVGFVKHGLRFLTLFLPHGTPLWLAPLMIVIELFTYLARPVSLSLRLAANMMAGHVLLKVIAGFTVSLMIYLKFLPIPLMVILIGFEIFVAILQAYIFTILSCMYLNDAINLH</sequence>
<accession>Q4UNH7</accession>
<feature type="chain" id="PRO_0000288664" description="ATP synthase subunit a">
    <location>
        <begin position="1"/>
        <end position="242"/>
    </location>
</feature>
<feature type="transmembrane region" description="Helical" evidence="1">
    <location>
        <begin position="29"/>
        <end position="49"/>
    </location>
</feature>
<feature type="transmembrane region" description="Helical" evidence="1">
    <location>
        <begin position="84"/>
        <end position="104"/>
    </location>
</feature>
<feature type="transmembrane region" description="Helical" evidence="1">
    <location>
        <begin position="114"/>
        <end position="134"/>
    </location>
</feature>
<feature type="transmembrane region" description="Helical" evidence="1">
    <location>
        <begin position="140"/>
        <end position="160"/>
    </location>
</feature>
<feature type="transmembrane region" description="Helical" evidence="1">
    <location>
        <begin position="189"/>
        <end position="209"/>
    </location>
</feature>
<feature type="transmembrane region" description="Helical" evidence="1">
    <location>
        <begin position="210"/>
        <end position="230"/>
    </location>
</feature>
<dbReference type="EMBL" id="CP000053">
    <property type="protein sequence ID" value="AAY60881.1"/>
    <property type="molecule type" value="Genomic_DNA"/>
</dbReference>
<dbReference type="SMR" id="Q4UNH7"/>
<dbReference type="STRING" id="315456.RF_0030"/>
<dbReference type="KEGG" id="rfe:RF_0030"/>
<dbReference type="eggNOG" id="COG0356">
    <property type="taxonomic scope" value="Bacteria"/>
</dbReference>
<dbReference type="HOGENOM" id="CLU_041018_0_2_5"/>
<dbReference type="OrthoDB" id="9809130at2"/>
<dbReference type="Proteomes" id="UP000008548">
    <property type="component" value="Chromosome"/>
</dbReference>
<dbReference type="GO" id="GO:0005886">
    <property type="term" value="C:plasma membrane"/>
    <property type="evidence" value="ECO:0007669"/>
    <property type="project" value="UniProtKB-SubCell"/>
</dbReference>
<dbReference type="GO" id="GO:0045259">
    <property type="term" value="C:proton-transporting ATP synthase complex"/>
    <property type="evidence" value="ECO:0007669"/>
    <property type="project" value="UniProtKB-KW"/>
</dbReference>
<dbReference type="GO" id="GO:0046933">
    <property type="term" value="F:proton-transporting ATP synthase activity, rotational mechanism"/>
    <property type="evidence" value="ECO:0007669"/>
    <property type="project" value="UniProtKB-UniRule"/>
</dbReference>
<dbReference type="CDD" id="cd00310">
    <property type="entry name" value="ATP-synt_Fo_a_6"/>
    <property type="match status" value="1"/>
</dbReference>
<dbReference type="FunFam" id="1.20.120.220:FF:000003">
    <property type="entry name" value="ATP synthase subunit a"/>
    <property type="match status" value="1"/>
</dbReference>
<dbReference type="Gene3D" id="1.20.120.220">
    <property type="entry name" value="ATP synthase, F0 complex, subunit A"/>
    <property type="match status" value="1"/>
</dbReference>
<dbReference type="HAMAP" id="MF_01393">
    <property type="entry name" value="ATP_synth_a_bact"/>
    <property type="match status" value="1"/>
</dbReference>
<dbReference type="InterPro" id="IPR000568">
    <property type="entry name" value="ATP_synth_F0_asu"/>
</dbReference>
<dbReference type="InterPro" id="IPR023011">
    <property type="entry name" value="ATP_synth_F0_asu_AS"/>
</dbReference>
<dbReference type="InterPro" id="IPR045083">
    <property type="entry name" value="ATP_synth_F0_asu_bact/mt"/>
</dbReference>
<dbReference type="InterPro" id="IPR035908">
    <property type="entry name" value="F0_ATP_A_sf"/>
</dbReference>
<dbReference type="NCBIfam" id="TIGR01131">
    <property type="entry name" value="ATP_synt_6_or_A"/>
    <property type="match status" value="1"/>
</dbReference>
<dbReference type="NCBIfam" id="NF004482">
    <property type="entry name" value="PRK05815.2-4"/>
    <property type="match status" value="1"/>
</dbReference>
<dbReference type="PANTHER" id="PTHR11410">
    <property type="entry name" value="ATP SYNTHASE SUBUNIT A"/>
    <property type="match status" value="1"/>
</dbReference>
<dbReference type="PANTHER" id="PTHR11410:SF0">
    <property type="entry name" value="ATP SYNTHASE SUBUNIT A"/>
    <property type="match status" value="1"/>
</dbReference>
<dbReference type="Pfam" id="PF00119">
    <property type="entry name" value="ATP-synt_A"/>
    <property type="match status" value="1"/>
</dbReference>
<dbReference type="PRINTS" id="PR00123">
    <property type="entry name" value="ATPASEA"/>
</dbReference>
<dbReference type="SUPFAM" id="SSF81336">
    <property type="entry name" value="F1F0 ATP synthase subunit A"/>
    <property type="match status" value="1"/>
</dbReference>
<dbReference type="PROSITE" id="PS00449">
    <property type="entry name" value="ATPASE_A"/>
    <property type="match status" value="1"/>
</dbReference>